<sequence length="375" mass="41370">MKTQPSEESASPAPVNPGNSGNSGNRRASSTRISFSDQLDGGDSGDSSSNESERLMESDDEGNIQIPVPTGQPRGRMGRRFTLNPLIFAKEEREARRQSLAQLKLSYYPKHMNPEHYDTGLGFCGWFLMGLSWIMVISTFPVSIYFCMKVVQEYERAVIFRLGRLIGGGAKGPGIFFVLPCIESYTKVDLRTVSFSVPPQEILTKDSVTTSVDAVIYYRISNATVSVANVENAHHSTRLLAQTTLRNMLGTRSLSEILSDRETLAASMQTILDEATESWGIKVERVEIKDVRLPIQLQRAMAAEAEATREARAKVIAAEGEQKASRALRDAASVIAQSPAALQLRYLQTLNSVAAEKNSTIIFPLPMELVRHLIN</sequence>
<proteinExistence type="inferred from homology"/>
<evidence type="ECO:0000255" key="1"/>
<evidence type="ECO:0000256" key="2">
    <source>
        <dbReference type="SAM" id="MobiDB-lite"/>
    </source>
</evidence>
<evidence type="ECO:0000269" key="3">
    <source>
    </source>
</evidence>
<evidence type="ECO:0000305" key="4"/>
<organism>
    <name type="scientific">Caenorhabditis elegans</name>
    <dbReference type="NCBI Taxonomy" id="6239"/>
    <lineage>
        <taxon>Eukaryota</taxon>
        <taxon>Metazoa</taxon>
        <taxon>Ecdysozoa</taxon>
        <taxon>Nematoda</taxon>
        <taxon>Chromadorea</taxon>
        <taxon>Rhabditida</taxon>
        <taxon>Rhabditina</taxon>
        <taxon>Rhabditomorpha</taxon>
        <taxon>Rhabditoidea</taxon>
        <taxon>Rhabditidae</taxon>
        <taxon>Peloderinae</taxon>
        <taxon>Caenorhabditis</taxon>
    </lineage>
</organism>
<reference key="1">
    <citation type="journal article" date="1998" name="Science">
        <title>Genome sequence of the nematode C. elegans: a platform for investigating biology.</title>
        <authorList>
            <consortium name="The C. elegans sequencing consortium"/>
        </authorList>
    </citation>
    <scope>NUCLEOTIDE SEQUENCE [LARGE SCALE GENOMIC DNA]</scope>
    <scope>ALTERNATIVE SPLICING</scope>
    <source>
        <strain>Bristol N2</strain>
    </source>
</reference>
<reference key="2">
    <citation type="journal article" date="2005" name="Curr. Biol.">
        <title>Functional genomics of the cilium, a sensory organelle.</title>
        <authorList>
            <person name="Blacque O.E."/>
            <person name="Perens E.A."/>
            <person name="Boroevich K.A."/>
            <person name="Inglis P.N."/>
            <person name="Li C."/>
            <person name="Warner A."/>
            <person name="Khattra J."/>
            <person name="Holt R.A."/>
            <person name="Ou G."/>
            <person name="Mah A.K."/>
            <person name="McKay S.J."/>
            <person name="Huang P."/>
            <person name="Swoboda P."/>
            <person name="Jones S.J.M."/>
            <person name="Marra M.A."/>
            <person name="Baillie D.L."/>
            <person name="Moerman D.G."/>
            <person name="Shaham S."/>
            <person name="Leroux M.R."/>
        </authorList>
    </citation>
    <scope>FUNCTION</scope>
</reference>
<feature type="chain" id="PRO_0000094040" description="Stomatin-2">
    <location>
        <begin position="1"/>
        <end position="375"/>
    </location>
</feature>
<feature type="transmembrane region" description="Helical" evidence="1">
    <location>
        <begin position="120"/>
        <end position="140"/>
    </location>
</feature>
<feature type="region of interest" description="Disordered" evidence="2">
    <location>
        <begin position="1"/>
        <end position="75"/>
    </location>
</feature>
<feature type="compositionally biased region" description="Low complexity" evidence="2">
    <location>
        <begin position="11"/>
        <end position="50"/>
    </location>
</feature>
<feature type="splice variant" id="VSP_039799" description="In isoform a." evidence="4">
    <location>
        <begin position="1"/>
        <end position="55"/>
    </location>
</feature>
<feature type="splice variant" id="VSP_039800" description="In isoform d." evidence="4">
    <location>
        <begin position="1"/>
        <end position="28"/>
    </location>
</feature>
<feature type="splice variant" id="VSP_039801" description="In isoform b." evidence="4">
    <location>
        <begin position="1"/>
        <end position="17"/>
    </location>
</feature>
<feature type="splice variant" id="VSP_039802" description="In isoform b." evidence="4">
    <original>GNSGNSGNRRASSTRISFSDQLD</original>
    <variation>MSKSEGSRKVKLRFAASGVSSSN</variation>
    <location>
        <begin position="18"/>
        <end position="40"/>
    </location>
</feature>
<feature type="splice variant" id="VSP_039803" description="In isoform d." evidence="4">
    <original>SSTRISFSDQLD</original>
    <variation>MEFLEVRQGSPN</variation>
    <location>
        <begin position="29"/>
        <end position="40"/>
    </location>
</feature>
<comment type="function">
    <text evidence="3">May be involved in cilia-related function.</text>
</comment>
<comment type="subcellular location">
    <subcellularLocation>
        <location evidence="4">Membrane</location>
        <topology evidence="4">Single-pass membrane protein</topology>
    </subcellularLocation>
</comment>
<comment type="alternative products">
    <event type="alternative splicing"/>
    <isoform>
        <id>Q19958-1</id>
        <name>c</name>
        <sequence type="displayed"/>
    </isoform>
    <isoform>
        <id>Q19958-2</id>
        <name>a</name>
        <sequence type="described" ref="VSP_039799"/>
    </isoform>
    <isoform>
        <id>Q19958-3</id>
        <name>b</name>
        <sequence type="described" ref="VSP_039801 VSP_039802"/>
    </isoform>
    <isoform>
        <id>Q19958-4</id>
        <name>d</name>
        <sequence type="described" ref="VSP_039800 VSP_039803"/>
    </isoform>
</comment>
<comment type="similarity">
    <text evidence="4">Belongs to the band 7/mec-2 family.</text>
</comment>
<name>STO2_CAEEL</name>
<gene>
    <name type="primary">sto-2</name>
    <name type="ORF">F32A6.5</name>
</gene>
<protein>
    <recommendedName>
        <fullName>Stomatin-2</fullName>
    </recommendedName>
</protein>
<accession>Q19958</accession>
<accession>D5MCN3</accession>
<accession>D5MCN4</accession>
<accession>D5MCN5</accession>
<accession>D5MCN6</accession>
<keyword id="KW-0025">Alternative splicing</keyword>
<keyword id="KW-0472">Membrane</keyword>
<keyword id="KW-1185">Reference proteome</keyword>
<keyword id="KW-0812">Transmembrane</keyword>
<keyword id="KW-1133">Transmembrane helix</keyword>
<dbReference type="EMBL" id="FO080679">
    <property type="protein sequence ID" value="CCD65719.1"/>
    <property type="molecule type" value="Genomic_DNA"/>
</dbReference>
<dbReference type="EMBL" id="FO080679">
    <property type="protein sequence ID" value="CCD65720.1"/>
    <property type="molecule type" value="Genomic_DNA"/>
</dbReference>
<dbReference type="EMBL" id="FO080679">
    <property type="protein sequence ID" value="CCD65722.1"/>
    <property type="molecule type" value="Genomic_DNA"/>
</dbReference>
<dbReference type="EMBL" id="FO080679">
    <property type="protein sequence ID" value="CCD65723.1"/>
    <property type="molecule type" value="Genomic_DNA"/>
</dbReference>
<dbReference type="PIR" id="T16240">
    <property type="entry name" value="T16240"/>
</dbReference>
<dbReference type="RefSeq" id="NP_001257020.1">
    <molecule id="Q19958-3"/>
    <property type="nucleotide sequence ID" value="NM_001270091.4"/>
</dbReference>
<dbReference type="RefSeq" id="NP_001257021.1">
    <molecule id="Q19958-1"/>
    <property type="nucleotide sequence ID" value="NM_001270092.5"/>
</dbReference>
<dbReference type="RefSeq" id="NP_001257022.1">
    <molecule id="Q19958-4"/>
    <property type="nucleotide sequence ID" value="NM_001270093.4"/>
</dbReference>
<dbReference type="RefSeq" id="NP_001257023.1">
    <molecule id="Q19958-2"/>
    <property type="nucleotide sequence ID" value="NM_001270094.2"/>
</dbReference>
<dbReference type="SMR" id="Q19958"/>
<dbReference type="BioGRID" id="45736">
    <property type="interactions" value="1"/>
</dbReference>
<dbReference type="FunCoup" id="Q19958">
    <property type="interactions" value="110"/>
</dbReference>
<dbReference type="STRING" id="6239.F32A6.5c.1"/>
<dbReference type="iPTMnet" id="Q19958"/>
<dbReference type="PaxDb" id="6239-F32A6.5c"/>
<dbReference type="PeptideAtlas" id="Q19958"/>
<dbReference type="EnsemblMetazoa" id="F32A6.5a.1">
    <molecule id="Q19958-2"/>
    <property type="protein sequence ID" value="F32A6.5a.1"/>
    <property type="gene ID" value="WBGene00006064"/>
</dbReference>
<dbReference type="EnsemblMetazoa" id="F32A6.5b.1">
    <molecule id="Q19958-3"/>
    <property type="protein sequence ID" value="F32A6.5b.1"/>
    <property type="gene ID" value="WBGene00006064"/>
</dbReference>
<dbReference type="EnsemblMetazoa" id="F32A6.5c.1">
    <molecule id="Q19958-1"/>
    <property type="protein sequence ID" value="F32A6.5c.1"/>
    <property type="gene ID" value="WBGene00006064"/>
</dbReference>
<dbReference type="EnsemblMetazoa" id="F32A6.5d.1">
    <molecule id="Q19958-4"/>
    <property type="protein sequence ID" value="F32A6.5d.1"/>
    <property type="gene ID" value="WBGene00006064"/>
</dbReference>
<dbReference type="GeneID" id="180802"/>
<dbReference type="KEGG" id="cel:CELE_F32A6.5"/>
<dbReference type="UCSC" id="F32A6.5">
    <molecule id="Q19958-1"/>
    <property type="organism name" value="c. elegans"/>
</dbReference>
<dbReference type="AGR" id="WB:WBGene00006064"/>
<dbReference type="CTD" id="180802"/>
<dbReference type="WormBase" id="F32A6.5a">
    <molecule id="Q19958-2"/>
    <property type="protein sequence ID" value="CE43778"/>
    <property type="gene ID" value="WBGene00006064"/>
    <property type="gene designation" value="sto-2"/>
</dbReference>
<dbReference type="WormBase" id="F32A6.5b">
    <molecule id="Q19958-3"/>
    <property type="protein sequence ID" value="CE44788"/>
    <property type="gene ID" value="WBGene00006064"/>
    <property type="gene designation" value="sto-2"/>
</dbReference>
<dbReference type="WormBase" id="F32A6.5c">
    <molecule id="Q19958-1"/>
    <property type="protein sequence ID" value="CE44738"/>
    <property type="gene ID" value="WBGene00006064"/>
    <property type="gene designation" value="sto-2"/>
</dbReference>
<dbReference type="WormBase" id="F32A6.5d">
    <molecule id="Q19958-4"/>
    <property type="protein sequence ID" value="CE44767"/>
    <property type="gene ID" value="WBGene00006064"/>
    <property type="gene designation" value="sto-2"/>
</dbReference>
<dbReference type="eggNOG" id="KOG2621">
    <property type="taxonomic scope" value="Eukaryota"/>
</dbReference>
<dbReference type="GeneTree" id="ENSGT01030000234614"/>
<dbReference type="InParanoid" id="Q19958"/>
<dbReference type="OMA" id="IQQMVRV"/>
<dbReference type="OrthoDB" id="2105077at2759"/>
<dbReference type="PhylomeDB" id="Q19958"/>
<dbReference type="Reactome" id="R-CEL-2672351">
    <property type="pathway name" value="Stimuli-sensing channels"/>
</dbReference>
<dbReference type="Reactome" id="R-CEL-373753">
    <property type="pathway name" value="Nephrin family interactions"/>
</dbReference>
<dbReference type="Reactome" id="R-CEL-6798695">
    <property type="pathway name" value="Neutrophil degranulation"/>
</dbReference>
<dbReference type="Reactome" id="R-CEL-8980692">
    <property type="pathway name" value="RHOA GTPase cycle"/>
</dbReference>
<dbReference type="Reactome" id="R-CEL-9013026">
    <property type="pathway name" value="RHOB GTPase cycle"/>
</dbReference>
<dbReference type="Reactome" id="R-CEL-9013406">
    <property type="pathway name" value="RHOQ GTPase cycle"/>
</dbReference>
<dbReference type="Reactome" id="R-CEL-9013407">
    <property type="pathway name" value="RHOH GTPase cycle"/>
</dbReference>
<dbReference type="PRO" id="PR:Q19958"/>
<dbReference type="Proteomes" id="UP000001940">
    <property type="component" value="Chromosome X"/>
</dbReference>
<dbReference type="Bgee" id="WBGene00006064">
    <property type="expression patterns" value="Expressed in pharyngeal muscle cell (C elegans) and 3 other cell types or tissues"/>
</dbReference>
<dbReference type="GO" id="GO:0005886">
    <property type="term" value="C:plasma membrane"/>
    <property type="evidence" value="ECO:0000318"/>
    <property type="project" value="GO_Central"/>
</dbReference>
<dbReference type="FunFam" id="3.30.479.30:FF:000026">
    <property type="entry name" value="Uncharacterized protein"/>
    <property type="match status" value="1"/>
</dbReference>
<dbReference type="Gene3D" id="6.10.250.2090">
    <property type="match status" value="1"/>
</dbReference>
<dbReference type="Gene3D" id="3.30.479.30">
    <property type="entry name" value="Band 7 domain"/>
    <property type="match status" value="1"/>
</dbReference>
<dbReference type="InterPro" id="IPR043202">
    <property type="entry name" value="Band-7_stomatin-like"/>
</dbReference>
<dbReference type="InterPro" id="IPR001107">
    <property type="entry name" value="Band_7"/>
</dbReference>
<dbReference type="InterPro" id="IPR036013">
    <property type="entry name" value="Band_7/SPFH_dom_sf"/>
</dbReference>
<dbReference type="InterPro" id="IPR018080">
    <property type="entry name" value="Band_7/stomatin-like_CS"/>
</dbReference>
<dbReference type="InterPro" id="IPR001972">
    <property type="entry name" value="Stomatin_HflK_fam"/>
</dbReference>
<dbReference type="PANTHER" id="PTHR10264">
    <property type="entry name" value="BAND 7 PROTEIN-RELATED"/>
    <property type="match status" value="1"/>
</dbReference>
<dbReference type="PANTHER" id="PTHR10264:SF127">
    <property type="entry name" value="PODOCIN"/>
    <property type="match status" value="1"/>
</dbReference>
<dbReference type="Pfam" id="PF01145">
    <property type="entry name" value="Band_7"/>
    <property type="match status" value="1"/>
</dbReference>
<dbReference type="PRINTS" id="PR00721">
    <property type="entry name" value="STOMATIN"/>
</dbReference>
<dbReference type="SMART" id="SM00244">
    <property type="entry name" value="PHB"/>
    <property type="match status" value="1"/>
</dbReference>
<dbReference type="SUPFAM" id="SSF117892">
    <property type="entry name" value="Band 7/SPFH domain"/>
    <property type="match status" value="1"/>
</dbReference>
<dbReference type="PROSITE" id="PS01270">
    <property type="entry name" value="BAND_7"/>
    <property type="match status" value="1"/>
</dbReference>